<feature type="chain" id="PRO_0000085354" description="Protein Tat">
    <location>
        <begin position="1" status="less than"/>
        <end position="51"/>
    </location>
</feature>
<feature type="region of interest" description="Disordered" evidence="4">
    <location>
        <begin position="1"/>
        <end position="51"/>
    </location>
</feature>
<feature type="short sequence motif" description="Cell attachment site" evidence="3">
    <location>
        <begin position="28"/>
        <end position="30"/>
    </location>
</feature>
<feature type="compositionally biased region" description="Polar residues" evidence="4">
    <location>
        <begin position="1"/>
        <end position="25"/>
    </location>
</feature>
<feature type="compositionally biased region" description="Basic and acidic residues" evidence="4">
    <location>
        <begin position="33"/>
        <end position="43"/>
    </location>
</feature>
<feature type="cross-link" description="Glycyl lysine isopeptide (Lys-Gly) (interchain with G-Cter in ubiquitin)" evidence="1">
    <location>
        <position position="21"/>
    </location>
</feature>
<feature type="splice variant" id="VSP_022412" description="In isoform Short." evidence="5">
    <location>
        <begin position="23"/>
        <end position="51"/>
    </location>
</feature>
<feature type="non-terminal residue">
    <location>
        <position position="1"/>
    </location>
</feature>
<accession>P12508</accession>
<organismHost>
    <name type="scientific">Homo sapiens</name>
    <name type="common">Human</name>
    <dbReference type="NCBI Taxonomy" id="9606"/>
</organismHost>
<name>TAT_HV1J3</name>
<evidence type="ECO:0000250" key="1"/>
<evidence type="ECO:0000250" key="2">
    <source>
        <dbReference type="UniProtKB" id="P04608"/>
    </source>
</evidence>
<evidence type="ECO:0000255" key="3"/>
<evidence type="ECO:0000256" key="4">
    <source>
        <dbReference type="SAM" id="MobiDB-lite"/>
    </source>
</evidence>
<evidence type="ECO:0000305" key="5"/>
<dbReference type="EMBL" id="AH003604">
    <property type="protein sequence ID" value="AAB03524.1"/>
    <property type="molecule type" value="Genomic_RNA"/>
</dbReference>
<dbReference type="SMR" id="P12508"/>
<dbReference type="GO" id="GO:0005576">
    <property type="term" value="C:extracellular region"/>
    <property type="evidence" value="ECO:0007669"/>
    <property type="project" value="UniProtKB-SubCell"/>
</dbReference>
<dbReference type="GO" id="GO:0030430">
    <property type="term" value="C:host cell cytoplasm"/>
    <property type="evidence" value="ECO:0007669"/>
    <property type="project" value="UniProtKB-SubCell"/>
</dbReference>
<dbReference type="GO" id="GO:0044196">
    <property type="term" value="C:host cell nucleolus"/>
    <property type="evidence" value="ECO:0007669"/>
    <property type="project" value="UniProtKB-SubCell"/>
</dbReference>
<dbReference type="GO" id="GO:0046872">
    <property type="term" value="F:metal ion binding"/>
    <property type="evidence" value="ECO:0007669"/>
    <property type="project" value="UniProtKB-KW"/>
</dbReference>
<dbReference type="GO" id="GO:0003723">
    <property type="term" value="F:RNA binding"/>
    <property type="evidence" value="ECO:0007669"/>
    <property type="project" value="UniProtKB-KW"/>
</dbReference>
<organism>
    <name type="scientific">Human immunodeficiency virus type 1 group M subtype B (isolate JH32)</name>
    <name type="common">HIV-1</name>
    <dbReference type="NCBI Taxonomy" id="11694"/>
    <lineage>
        <taxon>Viruses</taxon>
        <taxon>Riboviria</taxon>
        <taxon>Pararnavirae</taxon>
        <taxon>Artverviricota</taxon>
        <taxon>Revtraviricetes</taxon>
        <taxon>Ortervirales</taxon>
        <taxon>Retroviridae</taxon>
        <taxon>Orthoretrovirinae</taxon>
        <taxon>Lentivirus</taxon>
        <taxon>Human immunodeficiency virus type 1</taxon>
    </lineage>
</organism>
<protein>
    <recommendedName>
        <fullName>Protein Tat</fullName>
    </recommendedName>
    <alternativeName>
        <fullName>Transactivating regulatory protein</fullName>
    </alternativeName>
</protein>
<comment type="function">
    <text evidence="2">Transcriptional activator that increases RNA Pol II processivity, thereby increasing the level of full-length viral transcripts. Recognizes a hairpin structure at the 5'-LTR of the nascent viral mRNAs referred to as the transactivation responsive RNA element (TAR) and recruits the cyclin T1-CDK9 complex (P-TEFb complex) that will in turn hyperphosphorylate the RNA polymerase II to allow efficient elongation. The CDK9 component of P-TEFb and other Tat-activated kinases hyperphosphorylate the C-terminus of RNA Pol II that becomes stabilized and much more processive. Other factors such as HTATSF1/Tat-SF1, SUPT5H/SPT5, and HTATIP2 are also important for Tat's function. Besides its effect on RNA Pol II processivity, Tat induces chromatin remodeling of proviral genes by recruiting the histone acetyltransferases (HATs) CREBBP, EP300 and PCAF to the chromatin. This also contributes to the increase in proviral transcription rate, especially when the provirus integrates in transcriptionally silent region of the host genome. To ensure maximal activation of the LTR, Tat mediates nuclear translocation of NF-kappa-B by interacting with host RELA. Through its interaction with host TBP, Tat may also modulate transcription initiation. Tat can reactivate a latently infected cell by penetrating in it and transactivating its LTR promoter. In the cytoplasm, Tat is thought to act as a translational activator of HIV-1 mRNAs.</text>
</comment>
<comment type="function">
    <text evidence="1">Extracellular circulating Tat can be endocytosed by surrounding uninfected cells via the binding to several surface receptors such as CD26, CXCR4, heparan sulfate proteoglycans (HSPG) or LDLR. Neurons are rarely infected, but they internalize Tat via their LDLR. Endosomal low pH allows Tat to cross the endosome membrane to enter the cytosol and eventually further translocate into the nucleus, thereby inducing severe cell dysfunctions ranging from cell activation to cell death. Through its interaction with nuclear HATs, Tat is potentially able to control the acetylation-dependent cellular gene expression. Tat seems to inhibit the HAT activity of KAT5/Tip60 and TAF1, and consequently modify the expression of specific cellular genes. Modulates the expression of many cellular genes involved in cell survival, proliferation or in coding for cytokines (such as IL10) or cytokine receptors. May be involved in the derepression of host interleukin IL2 expression. Mediates the activation of cyclin-dependent kinases and dysregulation of microtubule network. Tat plays a role in T-cell and neurons apoptosis. Tat induced neurotoxicity and apoptosis probably contribute to neuroAIDS. Host extracellular matrix metalloproteinase MMP1 cleaves Tat and decreases Tat's mediated neurotoxicity. Circulating Tat also acts as a chemokine-like and/or growth factor-like molecule that binds to specific receptors on the surface of the cells, affecting many cellular pathways. In the vascular system, Tat binds to ITGAV/ITGB3 and ITGA5/ITGB1 integrins dimers at the surface of endothelial cells and competes with bFGF for heparin-binding sites, leading to an excess of soluble bFGF. Binds to KDR/VEGFR-2. All these Tat-mediated effects enhance angiogenesis in Kaposi's sarcoma lesions (By similarity).</text>
</comment>
<comment type="subunit">
    <text evidence="1">Interacts with host CCNT1. Associates with the P-TEFb complex composed at least of Tat, P-TEFb (CDK9 and CCNT1), TAR RNA, RNA Pol II. Recruits the HATs CREBBP, TAF1/TFIID, EP300, PCAF and GCN5L2. Interacts with host KAT5/Tip60; this interaction targets the latter to degradation. Interacts with the host deacetylase SIRT1. Interacts with host capping enzyme RNGTT; this interaction stimulates RNGTT. Binds to host KDR, and to the host integrins ITGAV/ITGB3 and ITGA5/ITGB1. Interacts with host KPNB1/importin beta-1 without previous binding to KPNA1/importin alpha-1. Interacts with EIF2AK2. Interacts with host nucleosome assembly protein NAP1L1; this interaction may be required for the transport of Tat within the nucleus, since the two proteins interact at the nuclear rim. Interacts with host C1QBP/SF2P32; this interaction involves lysine-acetylated Tat. Interacts with the host chemokine receptors CCR2, CCR3 and CXCR4. Interacts with host DPP4/CD26; this interaction may trigger an anti-proliferative effect. Interacts with host LDLR. Interacts with the host extracellular matrix metalloproteinase MMP1. Interacts with host PRMT6; this interaction mediates Tat's methylation. Interacts with, and is ubiquitinated by MDM2/Hdm2. Interacts with host PSMC3 and HTATIP2. Interacts with STAB1; this interaction may overcome SATB1-mediated repression of IL2 and IL2RA (interleukin) in T cells by binding to the same domain than HDAC1. Interacts (when acetylated) with human CDK13, thereby increasing HIV-1 mRNA splicing and promoting the production of the doubly spliced HIV-1 protein Nef (By similarity).</text>
</comment>
<comment type="subcellular location">
    <subcellularLocation>
        <location>Host nucleus</location>
        <location>Host nucleolus</location>
    </subcellularLocation>
    <subcellularLocation>
        <location>Host cytoplasm</location>
    </subcellularLocation>
    <subcellularLocation>
        <location>Secreted</location>
    </subcellularLocation>
    <text evidence="1">Probably localizes to both nuclear and nucleolar compartments. Nuclear localization is mediated through the interaction of the nuclear localization signal with importin KPNB1. Secretion occurs through a Golgi-independent pathway. Tat is released from infected cells to the extracellular space where it remains associated to the cell membrane, or is secreted into the cerebrospinal fluid and sera. Extracellular Tat can be endocytosed by surrounding uninfected cells via binding to several receptors depending on the cell type (By similarity).</text>
</comment>
<comment type="alternative products">
    <event type="alternative splicing"/>
    <isoform>
        <id>P12508-1</id>
        <name>Long</name>
        <sequence type="displayed"/>
    </isoform>
    <isoform>
        <id>P12508-2</id>
        <name>Short</name>
        <sequence type="described" ref="VSP_022412"/>
    </isoform>
</comment>
<comment type="domain">
    <text evidence="1">The transactivation domain mediates the interaction with CCNT1, GCN5L2, and MDM2.</text>
</comment>
<comment type="domain">
    <text evidence="1">The Arg-rich RNA-binding region binds the TAR RNA. This region also mediates the nuclear localization through direct binding to KPNB1 and is involved in Tat's transfer across cell membranes (protein transduction). The same region is required for the interaction with EP300, PCAF, EIF2AK2 and KDR (By similarity).</text>
</comment>
<comment type="domain">
    <text evidence="1 5">The Cys-rich region may bind 2 zinc ions (Potential). This region is involved in binding to KAT5 (By similarity).</text>
</comment>
<comment type="domain">
    <text evidence="1">The cell attachment site mediates the interaction with ITGAV/ITGB3 and ITGA5/ITGB1 integrins, leading to vascular cell migration and invasion. This interaction also provides endothelial cells with the adhesion signal they require to grow in response to mitogens (By similarity).</text>
</comment>
<comment type="PTM">
    <text evidence="1">Acetylation by EP300, CREBBP, GCN5L2/GCN5 and PCAF regulates the transactivation activity of Tat.</text>
</comment>
<comment type="PTM">
    <text evidence="1">Phosphorylated by EIF2AK2 on serine and threonine residues adjacent to the basic region important for TAR RNA binding and function. Phosphorylation of Tat by EIF2AK2 is dependent on the prior activation of EIF2AK2 by dsRNA (By similarity).</text>
</comment>
<comment type="PTM">
    <text evidence="1">Asymmetrical arginine methylation by host PRMT6 seems to diminish the transactivation capacity of Tat and affects the interaction with host CCNT1.</text>
</comment>
<comment type="PTM">
    <text evidence="1">Polyubiquitination by MDM2 does not target Tat to degradation, but activates its transactivation function and fosters interaction with CCNT1 and TAR RNA.</text>
</comment>
<comment type="miscellaneous">
    <text>HIV-1 lineages are divided in three main groups, M (for Major), O (for Outlier), and N (for New, or Non-M, Non-O). The vast majority of strains found worldwide belong to the group M. Group O seems to be endemic to and largely confined to Cameroon and neighboring countries in West Central Africa, where these viruses represent a small minority of HIV-1 strains. The group N is represented by a limited number of isolates from Cameroonian persons. The group M is further subdivided in 9 clades or subtypes (A to D, F to H, J and K).</text>
</comment>
<comment type="miscellaneous">
    <molecule>Isoform Short</molecule>
    <text evidence="5">Expressed in the late stage of the infection cycle, when unspliced viral RNAs are exported to the cytoplasm by the viral Rev protein.</text>
</comment>
<comment type="similarity">
    <text evidence="5">Belongs to the lentiviruses Tat family.</text>
</comment>
<sequence length="51" mass="5439">EAETATKSCSGRQANQVSLPKQPASQPRGDPTGPKESKKKVETETETDPVN</sequence>
<reference key="1">
    <citation type="journal article" date="1989" name="AIDS Res. Hum. Retroviruses">
        <title>Nucleotide sequences of gag and env genes of a Japanese isolate of HIV-1 and their expression in bacteria.</title>
        <authorList>
            <person name="Komiyama N."/>
            <person name="Hattori N."/>
            <person name="Inoue J."/>
            <person name="Sakuma S."/>
            <person name="Kurimura T."/>
            <person name="Yoshida M."/>
        </authorList>
    </citation>
    <scope>NUCLEOTIDE SEQUENCE [GENOMIC RNA]</scope>
</reference>
<reference key="2">
    <citation type="journal article" date="2005" name="Microbes Infect.">
        <title>Decoding Tat: the biology of HIV Tat posttranslational modifications.</title>
        <authorList>
            <person name="Hetzer C."/>
            <person name="Dormeyer W."/>
            <person name="Schnolzer M."/>
            <person name="Ott M."/>
        </authorList>
    </citation>
    <scope>REVIEW</scope>
    <scope>ALTERNATIVE SPLICING</scope>
</reference>
<reference key="3">
    <citation type="journal article" date="2006" name="Front. Biosci.">
        <title>The multiple functions of HIV-1 Tat: proliferation versus apoptosis.</title>
        <authorList>
            <person name="Peruzzi F."/>
        </authorList>
    </citation>
    <scope>REVIEW</scope>
</reference>
<reference key="4">
    <citation type="journal article" date="2006" name="Microbes Infect.">
        <title>HIV tat and neurotoxicity.</title>
        <authorList>
            <person name="King J.E."/>
            <person name="Eugenin E.A."/>
            <person name="Buckner C.M."/>
            <person name="Berman J.W."/>
        </authorList>
    </citation>
    <scope>REVIEW</scope>
</reference>
<keyword id="KW-0007">Acetylation</keyword>
<keyword id="KW-0010">Activator</keyword>
<keyword id="KW-0014">AIDS</keyword>
<keyword id="KW-0025">Alternative splicing</keyword>
<keyword id="KW-0053">Apoptosis</keyword>
<keyword id="KW-1035">Host cytoplasm</keyword>
<keyword id="KW-1048">Host nucleus</keyword>
<keyword id="KW-0945">Host-virus interaction</keyword>
<keyword id="KW-1017">Isopeptide bond</keyword>
<keyword id="KW-0479">Metal-binding</keyword>
<keyword id="KW-0488">Methylation</keyword>
<keyword id="KW-0597">Phosphoprotein</keyword>
<keyword id="KW-0694">RNA-binding</keyword>
<keyword id="KW-0964">Secreted</keyword>
<keyword id="KW-0804">Transcription</keyword>
<keyword id="KW-0805">Transcription regulation</keyword>
<keyword id="KW-0832">Ubl conjugation</keyword>
<keyword id="KW-0862">Zinc</keyword>
<proteinExistence type="inferred from homology"/>